<name>UVRA_CHLMU</name>
<keyword id="KW-0067">ATP-binding</keyword>
<keyword id="KW-0963">Cytoplasm</keyword>
<keyword id="KW-0227">DNA damage</keyword>
<keyword id="KW-0228">DNA excision</keyword>
<keyword id="KW-0234">DNA repair</keyword>
<keyword id="KW-0238">DNA-binding</keyword>
<keyword id="KW-0267">Excision nuclease</keyword>
<keyword id="KW-0479">Metal-binding</keyword>
<keyword id="KW-0547">Nucleotide-binding</keyword>
<keyword id="KW-0677">Repeat</keyword>
<keyword id="KW-0742">SOS response</keyword>
<keyword id="KW-0862">Zinc</keyword>
<keyword id="KW-0863">Zinc-finger</keyword>
<comment type="function">
    <text evidence="1">The UvrABC repair system catalyzes the recognition and processing of DNA lesions. UvrA is an ATPase and a DNA-binding protein. A damage recognition complex composed of 2 UvrA and 2 UvrB subunits scans DNA for abnormalities. When the presence of a lesion has been verified by UvrB, the UvrA molecules dissociate (By similarity).</text>
</comment>
<comment type="subunit">
    <text evidence="1">Forms a heterotetramer with UvrB during the search for lesions.</text>
</comment>
<comment type="subcellular location">
    <subcellularLocation>
        <location evidence="1">Cytoplasm</location>
    </subcellularLocation>
</comment>
<comment type="similarity">
    <text evidence="3">Belongs to the ABC transporter superfamily. UvrA family.</text>
</comment>
<gene>
    <name type="primary">uvrA</name>
    <name type="ordered locus">TC_0610</name>
</gene>
<sequence length="1787" mass="196467">MPSIVRLSGITVRNLKNVTVEFCPREIVLFTGVSGSGKSSLAFNTIYAAGRKRYITTLPSFFATRIHSLPDPAVKKVEGLSPTVAVKQNFFAQHVHATVGSTTEINSYLALLFSLDGQAYDPITLRPLTLYSKEKILAEIAAIPDGTQLTLLAPLPAGDILRVRECLRQGFTKILIDGEISPIHKFLATGVPVPSQLIIDTLIKNASNTPRLKVSLFTTLDIGHGECCLHFDNQKRVFSTQTTLPETQNTYTPLSPDLFSSHSHKDRCPQCHGSGIFVSINDPSIIQQNLSIEKNCCPFAGSCSILLYKTIYQSLADNLGFSLSTPWQDLSPEIQHIFLYGKEGLSLPVKLFDGTLGKTTQTHKQWKGVLNEIGEKIRFANKPSRYLPKGTSYTECPRCQKTGLSDYANAAKWHGKSFADLQQMSLQELFIFLNQLPPKDPAIEEVIQGLKARLAMLIDLGLPYLSPERSVNTLSGGEQERTALAKHLGAELMGVTYVLDEPSIGLHPQDTYKLMDVIKKLRDQGNTILLVEHDEQMISLADRVIDVGPGAGIFGGEVVFNGTPKEFLANSHSLTAQYLRQEQQIPIPAKRQTSLGSITLSRANKHNLKNLTVSIPLGQLTVVTGVSGSGKSSLINDTLVPCVEEFIEQGSCPNLAVQGKLSRLVHINRDLPGRSQRSISLTYIKAFDELRQLFAEQPRCKPLGLTKSHFSFNTPLGACSECGGLGSITAMDNQDSITCPSCSGKRFLPQVLEIRYKNKTIADILEMTAYEAESFFLDQPSIHNKIQALCTLGLQYLPLGRPLYSLSGGEIQRLKLACELSNPVKHPTLYVLDEPTTGLHTHDVKQLIHVLQSLTDQGHSVVIIEHNMHVVKIADYVLELGPEGGNKGGCLIASCSPEELIHKHTPTSLALRPFLSQHQELPHLPDLRQQPPIPAAIIITNAHHHNLKHIDVSIPRYALTTVTGPSASGKHSLVFDVLHAAGNISYAELFPPYIRQALIKKTPLPSVDKVIGLSPVIAIEKNSAKNSSHSVASALEISDMLEELFTQIGRPYSPVSGDLLKEVSPQTIAEELLENYAQGYVTITIPFPPEEDFFSYTQEMLREGFLKLYANEQLYDLEGPFPDCLESPALVIHHVKILEKNIPSILSSLSLAFSKSSSIRLHIENYGITTSKTYQLGLQDSLGNSFPSNDNTTHLCPFCHGNGSLSTFSILPYKNRFAEHTPLSLFTSLFPNQDPTPIYPLLEELGIPSIALFQEMDDHSFQKLCLGTLQNPGFDALCTKAMLAHPTTNFPTYLISETPCNQCQGNGTYTYEHCTRIHDISLSDIYQSDVPFLKKFLLSLGKDLPLVSDIFQKLELLERVGLSQVILGQEQSSLSDGERYQLLLAKAFSSGLTDVIYLLEDPLAGIHPKDAPSLLSVIKDLVANHNTVVVTDREGSLSKHADHVIHLGPEPGPNGGYLLETSAFRDLQPISQSTYISDQIPKLSVSVLTSAIQIDNLSIPLRSLSTISGVSGSGKTTLLLEGIYKSGCAMLEKDPSLFSEIIFLDSHPQPASSRSDISTYFDIAPSLRNFFSSLTQAKALNISASMFSPNTKQGQCSDCWGLGYQLIDRAFYAMEKRSCPTCGGFRVQPLVQEVVYEGKHFGQLLQSSLNEVAKDFSFLKKVQKPLQTLIANGLGYLPLGQNMSSLSLSEKIAIKITKYLFLPPKHPTLFLLDGVATSLDNQQKYTLLSQLKTLVSLGHTVVIIENHPAFSQYADFLIQMGHKTDKTSSRIIFSGINQSPSLSNKLE</sequence>
<dbReference type="EMBL" id="AE002160">
    <property type="protein sequence ID" value="AAF39441.1"/>
    <property type="molecule type" value="Genomic_DNA"/>
</dbReference>
<dbReference type="PIR" id="G81684">
    <property type="entry name" value="G81684"/>
</dbReference>
<dbReference type="RefSeq" id="WP_010230990.1">
    <property type="nucleotide sequence ID" value="NZ_CP063055.1"/>
</dbReference>
<dbReference type="SMR" id="Q9PK60"/>
<dbReference type="GeneID" id="1245972"/>
<dbReference type="KEGG" id="cmu:TC_0610"/>
<dbReference type="eggNOG" id="COG0178">
    <property type="taxonomic scope" value="Bacteria"/>
</dbReference>
<dbReference type="HOGENOM" id="CLU_001370_3_0_0"/>
<dbReference type="OrthoDB" id="9809851at2"/>
<dbReference type="Proteomes" id="UP000000800">
    <property type="component" value="Chromosome"/>
</dbReference>
<dbReference type="GO" id="GO:0005737">
    <property type="term" value="C:cytoplasm"/>
    <property type="evidence" value="ECO:0007669"/>
    <property type="project" value="UniProtKB-SubCell"/>
</dbReference>
<dbReference type="GO" id="GO:0009380">
    <property type="term" value="C:excinuclease repair complex"/>
    <property type="evidence" value="ECO:0007669"/>
    <property type="project" value="InterPro"/>
</dbReference>
<dbReference type="GO" id="GO:0005524">
    <property type="term" value="F:ATP binding"/>
    <property type="evidence" value="ECO:0007669"/>
    <property type="project" value="UniProtKB-KW"/>
</dbReference>
<dbReference type="GO" id="GO:0016887">
    <property type="term" value="F:ATP hydrolysis activity"/>
    <property type="evidence" value="ECO:0007669"/>
    <property type="project" value="InterPro"/>
</dbReference>
<dbReference type="GO" id="GO:0003677">
    <property type="term" value="F:DNA binding"/>
    <property type="evidence" value="ECO:0007669"/>
    <property type="project" value="UniProtKB-KW"/>
</dbReference>
<dbReference type="GO" id="GO:0004518">
    <property type="term" value="F:nuclease activity"/>
    <property type="evidence" value="ECO:0007669"/>
    <property type="project" value="UniProtKB-KW"/>
</dbReference>
<dbReference type="GO" id="GO:0008270">
    <property type="term" value="F:zinc ion binding"/>
    <property type="evidence" value="ECO:0007669"/>
    <property type="project" value="UniProtKB-KW"/>
</dbReference>
<dbReference type="GO" id="GO:0006289">
    <property type="term" value="P:nucleotide-excision repair"/>
    <property type="evidence" value="ECO:0007669"/>
    <property type="project" value="InterPro"/>
</dbReference>
<dbReference type="GO" id="GO:0009432">
    <property type="term" value="P:SOS response"/>
    <property type="evidence" value="ECO:0007669"/>
    <property type="project" value="UniProtKB-KW"/>
</dbReference>
<dbReference type="CDD" id="cd03238">
    <property type="entry name" value="ABC_UvrA"/>
    <property type="match status" value="1"/>
</dbReference>
<dbReference type="CDD" id="cd03271">
    <property type="entry name" value="ABC_UvrA_II"/>
    <property type="match status" value="1"/>
</dbReference>
<dbReference type="Gene3D" id="1.10.8.280">
    <property type="entry name" value="ABC transporter ATPase domain-like"/>
    <property type="match status" value="2"/>
</dbReference>
<dbReference type="Gene3D" id="1.20.1580.10">
    <property type="entry name" value="ABC transporter ATPase like domain"/>
    <property type="match status" value="5"/>
</dbReference>
<dbReference type="Gene3D" id="3.30.1490.20">
    <property type="entry name" value="ATP-grasp fold, A domain"/>
    <property type="match status" value="1"/>
</dbReference>
<dbReference type="Gene3D" id="3.40.50.300">
    <property type="entry name" value="P-loop containing nucleotide triphosphate hydrolases"/>
    <property type="match status" value="5"/>
</dbReference>
<dbReference type="InterPro" id="IPR003439">
    <property type="entry name" value="ABC_transporter-like_ATP-bd"/>
</dbReference>
<dbReference type="InterPro" id="IPR017871">
    <property type="entry name" value="ABC_transporter-like_CS"/>
</dbReference>
<dbReference type="InterPro" id="IPR013815">
    <property type="entry name" value="ATP_grasp_subdomain_1"/>
</dbReference>
<dbReference type="InterPro" id="IPR027417">
    <property type="entry name" value="P-loop_NTPase"/>
</dbReference>
<dbReference type="InterPro" id="IPR004602">
    <property type="entry name" value="UvrA"/>
</dbReference>
<dbReference type="InterPro" id="IPR041552">
    <property type="entry name" value="UvrA_DNA-bd"/>
</dbReference>
<dbReference type="InterPro" id="IPR041102">
    <property type="entry name" value="UvrA_inter"/>
</dbReference>
<dbReference type="NCBIfam" id="NF001885">
    <property type="entry name" value="PRK00635.1"/>
    <property type="match status" value="1"/>
</dbReference>
<dbReference type="NCBIfam" id="TIGR00630">
    <property type="entry name" value="uvra"/>
    <property type="match status" value="1"/>
</dbReference>
<dbReference type="PANTHER" id="PTHR43152">
    <property type="entry name" value="UVRABC SYSTEM PROTEIN A"/>
    <property type="match status" value="1"/>
</dbReference>
<dbReference type="PANTHER" id="PTHR43152:SF3">
    <property type="entry name" value="UVRABC SYSTEM PROTEIN A"/>
    <property type="match status" value="1"/>
</dbReference>
<dbReference type="Pfam" id="PF17755">
    <property type="entry name" value="UvrA_DNA-bind"/>
    <property type="match status" value="1"/>
</dbReference>
<dbReference type="Pfam" id="PF17760">
    <property type="entry name" value="UvrA_inter"/>
    <property type="match status" value="1"/>
</dbReference>
<dbReference type="SUPFAM" id="SSF52540">
    <property type="entry name" value="P-loop containing nucleoside triphosphate hydrolases"/>
    <property type="match status" value="4"/>
</dbReference>
<dbReference type="PROSITE" id="PS00211">
    <property type="entry name" value="ABC_TRANSPORTER_1"/>
    <property type="match status" value="1"/>
</dbReference>
<dbReference type="PROSITE" id="PS50893">
    <property type="entry name" value="ABC_TRANSPORTER_2"/>
    <property type="match status" value="1"/>
</dbReference>
<protein>
    <recommendedName>
        <fullName>UvrABC system protein A</fullName>
        <shortName>UvrA protein</shortName>
    </recommendedName>
    <alternativeName>
        <fullName>Excinuclease ABC subunit A</fullName>
    </alternativeName>
</protein>
<evidence type="ECO:0000250" key="1"/>
<evidence type="ECO:0000255" key="2">
    <source>
        <dbReference type="PROSITE-ProRule" id="PRU00434"/>
    </source>
</evidence>
<evidence type="ECO:0000305" key="3"/>
<accession>Q9PK60</accession>
<organism>
    <name type="scientific">Chlamydia muridarum (strain MoPn / Nigg)</name>
    <dbReference type="NCBI Taxonomy" id="243161"/>
    <lineage>
        <taxon>Bacteria</taxon>
        <taxon>Pseudomonadati</taxon>
        <taxon>Chlamydiota</taxon>
        <taxon>Chlamydiia</taxon>
        <taxon>Chlamydiales</taxon>
        <taxon>Chlamydiaceae</taxon>
        <taxon>Chlamydia/Chlamydophila group</taxon>
        <taxon>Chlamydia</taxon>
    </lineage>
</organism>
<proteinExistence type="inferred from homology"/>
<feature type="chain" id="PRO_0000093042" description="UvrABC system protein A">
    <location>
        <begin position="1"/>
        <end position="1787"/>
    </location>
</feature>
<feature type="domain" description="ABC transporter 1" evidence="2">
    <location>
        <begin position="300"/>
        <end position="574"/>
    </location>
</feature>
<feature type="domain" description="ABC transporter 2" evidence="2">
    <location>
        <begin position="594"/>
        <end position="912"/>
    </location>
</feature>
<feature type="domain" description="ABC transporter 3" evidence="2">
    <location>
        <begin position="1254"/>
        <end position="1474"/>
    </location>
</feature>
<feature type="zinc finger region" description="C4-type">
    <location>
        <begin position="719"/>
        <end position="742"/>
    </location>
</feature>
<feature type="zinc finger region" description="C4-type">
    <location>
        <begin position="1596"/>
        <end position="1622"/>
    </location>
</feature>
<feature type="binding site" evidence="2">
    <location>
        <begin position="410"/>
        <end position="417"/>
    </location>
    <ligand>
        <name>ATP</name>
        <dbReference type="ChEBI" id="CHEBI:30616"/>
        <label>1</label>
    </ligand>
</feature>
<feature type="binding site" evidence="2">
    <location>
        <begin position="625"/>
        <end position="632"/>
    </location>
    <ligand>
        <name>ATP</name>
        <dbReference type="ChEBI" id="CHEBI:30616"/>
        <label>2</label>
    </ligand>
</feature>
<feature type="binding site" evidence="2">
    <location>
        <begin position="964"/>
        <end position="971"/>
    </location>
    <ligand>
        <name>ATP</name>
        <dbReference type="ChEBI" id="CHEBI:30616"/>
        <label>3</label>
    </ligand>
</feature>
<feature type="binding site" evidence="2">
    <location>
        <begin position="1509"/>
        <end position="1516"/>
    </location>
    <ligand>
        <name>ATP</name>
        <dbReference type="ChEBI" id="CHEBI:30616"/>
        <label>4</label>
    </ligand>
</feature>
<reference key="1">
    <citation type="journal article" date="2000" name="Nucleic Acids Res.">
        <title>Genome sequences of Chlamydia trachomatis MoPn and Chlamydia pneumoniae AR39.</title>
        <authorList>
            <person name="Read T.D."/>
            <person name="Brunham R.C."/>
            <person name="Shen C."/>
            <person name="Gill S.R."/>
            <person name="Heidelberg J.F."/>
            <person name="White O."/>
            <person name="Hickey E.K."/>
            <person name="Peterson J.D."/>
            <person name="Utterback T.R."/>
            <person name="Berry K.J."/>
            <person name="Bass S."/>
            <person name="Linher K.D."/>
            <person name="Weidman J.F."/>
            <person name="Khouri H.M."/>
            <person name="Craven B."/>
            <person name="Bowman C."/>
            <person name="Dodson R.J."/>
            <person name="Gwinn M.L."/>
            <person name="Nelson W.C."/>
            <person name="DeBoy R.T."/>
            <person name="Kolonay J.F."/>
            <person name="McClarty G."/>
            <person name="Salzberg S.L."/>
            <person name="Eisen J.A."/>
            <person name="Fraser C.M."/>
        </authorList>
    </citation>
    <scope>NUCLEOTIDE SEQUENCE [LARGE SCALE GENOMIC DNA]</scope>
    <source>
        <strain>MoPn / Nigg</strain>
    </source>
</reference>